<comment type="function">
    <text evidence="1">Catalyzes the ATP-dependent transfer of a sulfur to tRNA to produce 4-thiouridine in position 8 of tRNAs, which functions as a near-UV photosensor. Also catalyzes the transfer of sulfur to the sulfur carrier protein ThiS, forming ThiS-thiocarboxylate. This is a step in the synthesis of thiazole, in the thiamine biosynthesis pathway. The sulfur is donated as persulfide by IscS.</text>
</comment>
<comment type="catalytic activity">
    <reaction evidence="1">
        <text>[ThiI sulfur-carrier protein]-S-sulfanyl-L-cysteine + a uridine in tRNA + 2 reduced [2Fe-2S]-[ferredoxin] + ATP + H(+) = [ThiI sulfur-carrier protein]-L-cysteine + a 4-thiouridine in tRNA + 2 oxidized [2Fe-2S]-[ferredoxin] + AMP + diphosphate</text>
        <dbReference type="Rhea" id="RHEA:24176"/>
        <dbReference type="Rhea" id="RHEA-COMP:10000"/>
        <dbReference type="Rhea" id="RHEA-COMP:10001"/>
        <dbReference type="Rhea" id="RHEA-COMP:13337"/>
        <dbReference type="Rhea" id="RHEA-COMP:13338"/>
        <dbReference type="Rhea" id="RHEA-COMP:13339"/>
        <dbReference type="Rhea" id="RHEA-COMP:13340"/>
        <dbReference type="ChEBI" id="CHEBI:15378"/>
        <dbReference type="ChEBI" id="CHEBI:29950"/>
        <dbReference type="ChEBI" id="CHEBI:30616"/>
        <dbReference type="ChEBI" id="CHEBI:33019"/>
        <dbReference type="ChEBI" id="CHEBI:33737"/>
        <dbReference type="ChEBI" id="CHEBI:33738"/>
        <dbReference type="ChEBI" id="CHEBI:61963"/>
        <dbReference type="ChEBI" id="CHEBI:65315"/>
        <dbReference type="ChEBI" id="CHEBI:136798"/>
        <dbReference type="ChEBI" id="CHEBI:456215"/>
        <dbReference type="EC" id="2.8.1.4"/>
    </reaction>
</comment>
<comment type="catalytic activity">
    <reaction evidence="1">
        <text>[ThiS sulfur-carrier protein]-C-terminal Gly-Gly-AMP + S-sulfanyl-L-cysteinyl-[cysteine desulfurase] + AH2 = [ThiS sulfur-carrier protein]-C-terminal-Gly-aminoethanethioate + L-cysteinyl-[cysteine desulfurase] + A + AMP + 2 H(+)</text>
        <dbReference type="Rhea" id="RHEA:43340"/>
        <dbReference type="Rhea" id="RHEA-COMP:12157"/>
        <dbReference type="Rhea" id="RHEA-COMP:12158"/>
        <dbReference type="Rhea" id="RHEA-COMP:12910"/>
        <dbReference type="Rhea" id="RHEA-COMP:19908"/>
        <dbReference type="ChEBI" id="CHEBI:13193"/>
        <dbReference type="ChEBI" id="CHEBI:15378"/>
        <dbReference type="ChEBI" id="CHEBI:17499"/>
        <dbReference type="ChEBI" id="CHEBI:29950"/>
        <dbReference type="ChEBI" id="CHEBI:61963"/>
        <dbReference type="ChEBI" id="CHEBI:90618"/>
        <dbReference type="ChEBI" id="CHEBI:232372"/>
        <dbReference type="ChEBI" id="CHEBI:456215"/>
    </reaction>
</comment>
<comment type="pathway">
    <text evidence="1">Cofactor biosynthesis; thiamine diphosphate biosynthesis.</text>
</comment>
<comment type="subcellular location">
    <subcellularLocation>
        <location evidence="1">Cytoplasm</location>
    </subcellularLocation>
</comment>
<comment type="similarity">
    <text evidence="1">Belongs to the ThiI family.</text>
</comment>
<gene>
    <name evidence="1" type="primary">thiI</name>
    <name type="ordered locus">OE_2858F</name>
</gene>
<sequence length="392" mass="41364">MLPPGADSVVVRHGDVGVKSSHVQSDMERTLRDNVAAMLADRGVPGDVEREWGRVLVRSPAPGRAADAAADTFGVVSASPAVSVAPDLDAISDALAAAARAHYDGGAFAVDARRAGTHDFDSHDVNRVGGDAVWAAVEDDFQPVVDLDDPDITFFVEVRDAEAFVFLTHRDGPGGMPLGTQQPLVALVSGGIDSPVAAWESMRRGAPVIPLYLALGDYGGPDHRARAEAAVRTLDDYAPNHDLSLRVAPAGDAIDRLAAATGRTRMLSFRRFMYRVAEHVAEHAGAAGIVTGEAVGQKSSQTTANLGVVDRATTLPVHRPLLTWDKQRITAAARSIDTFRDSSLDVGCNRLAPRQPLTAAPIESVRADEPDALFEWARAVAADTGPVEVAVA</sequence>
<name>THII_HALS3</name>
<feature type="chain" id="PRO_1000090016" description="Probable tRNA sulfurtransferase">
    <location>
        <begin position="1"/>
        <end position="392"/>
    </location>
</feature>
<feature type="domain" description="THUMP" evidence="1">
    <location>
        <begin position="63"/>
        <end position="169"/>
    </location>
</feature>
<feature type="binding site" evidence="1">
    <location>
        <begin position="187"/>
        <end position="188"/>
    </location>
    <ligand>
        <name>ATP</name>
        <dbReference type="ChEBI" id="CHEBI:30616"/>
    </ligand>
</feature>
<feature type="binding site" evidence="1">
    <location>
        <position position="270"/>
    </location>
    <ligand>
        <name>ATP</name>
        <dbReference type="ChEBI" id="CHEBI:30616"/>
    </ligand>
</feature>
<feature type="binding site" evidence="1">
    <location>
        <position position="292"/>
    </location>
    <ligand>
        <name>ATP</name>
        <dbReference type="ChEBI" id="CHEBI:30616"/>
    </ligand>
</feature>
<feature type="binding site" evidence="1">
    <location>
        <position position="301"/>
    </location>
    <ligand>
        <name>ATP</name>
        <dbReference type="ChEBI" id="CHEBI:30616"/>
    </ligand>
</feature>
<reference key="1">
    <citation type="journal article" date="2008" name="Genomics">
        <title>Evolution in the laboratory: the genome of Halobacterium salinarum strain R1 compared to that of strain NRC-1.</title>
        <authorList>
            <person name="Pfeiffer F."/>
            <person name="Schuster S.C."/>
            <person name="Broicher A."/>
            <person name="Falb M."/>
            <person name="Palm P."/>
            <person name="Rodewald K."/>
            <person name="Ruepp A."/>
            <person name="Soppa J."/>
            <person name="Tittor J."/>
            <person name="Oesterhelt D."/>
        </authorList>
    </citation>
    <scope>NUCLEOTIDE SEQUENCE [LARGE SCALE GENOMIC DNA]</scope>
    <source>
        <strain>ATCC 29341 / DSM 671 / R1</strain>
    </source>
</reference>
<proteinExistence type="inferred from homology"/>
<keyword id="KW-0067">ATP-binding</keyword>
<keyword id="KW-0963">Cytoplasm</keyword>
<keyword id="KW-0547">Nucleotide-binding</keyword>
<keyword id="KW-0694">RNA-binding</keyword>
<keyword id="KW-0784">Thiamine biosynthesis</keyword>
<keyword id="KW-0808">Transferase</keyword>
<keyword id="KW-0820">tRNA-binding</keyword>
<protein>
    <recommendedName>
        <fullName evidence="1">Probable tRNA sulfurtransferase</fullName>
        <ecNumber evidence="1">2.8.1.4</ecNumber>
    </recommendedName>
    <alternativeName>
        <fullName evidence="1">Sulfur carrier protein ThiS sulfurtransferase</fullName>
    </alternativeName>
    <alternativeName>
        <fullName evidence="1">Thiamine biosynthesis protein ThiI</fullName>
    </alternativeName>
    <alternativeName>
        <fullName evidence="1">tRNA 4-thiouridine synthase</fullName>
    </alternativeName>
</protein>
<dbReference type="EC" id="2.8.1.4" evidence="1"/>
<dbReference type="EMBL" id="AM774415">
    <property type="protein sequence ID" value="CAP13926.1"/>
    <property type="molecule type" value="Genomic_DNA"/>
</dbReference>
<dbReference type="RefSeq" id="WP_010902941.1">
    <property type="nucleotide sequence ID" value="NC_010364.1"/>
</dbReference>
<dbReference type="SMR" id="B0R5A9"/>
<dbReference type="EnsemblBacteria" id="CAP13926">
    <property type="protein sequence ID" value="CAP13926"/>
    <property type="gene ID" value="OE_2858F"/>
</dbReference>
<dbReference type="KEGG" id="hsl:OE_2858F"/>
<dbReference type="HOGENOM" id="CLU_037952_4_0_2"/>
<dbReference type="PhylomeDB" id="B0R5A9"/>
<dbReference type="UniPathway" id="UPA00060"/>
<dbReference type="Proteomes" id="UP000001321">
    <property type="component" value="Chromosome"/>
</dbReference>
<dbReference type="GO" id="GO:0005829">
    <property type="term" value="C:cytosol"/>
    <property type="evidence" value="ECO:0007669"/>
    <property type="project" value="TreeGrafter"/>
</dbReference>
<dbReference type="GO" id="GO:0005524">
    <property type="term" value="F:ATP binding"/>
    <property type="evidence" value="ECO:0007669"/>
    <property type="project" value="UniProtKB-UniRule"/>
</dbReference>
<dbReference type="GO" id="GO:0004810">
    <property type="term" value="F:CCA tRNA nucleotidyltransferase activity"/>
    <property type="evidence" value="ECO:0007669"/>
    <property type="project" value="InterPro"/>
</dbReference>
<dbReference type="GO" id="GO:0000049">
    <property type="term" value="F:tRNA binding"/>
    <property type="evidence" value="ECO:0007669"/>
    <property type="project" value="UniProtKB-UniRule"/>
</dbReference>
<dbReference type="GO" id="GO:0140741">
    <property type="term" value="F:tRNA-uracil-4 sulfurtransferase activity"/>
    <property type="evidence" value="ECO:0007669"/>
    <property type="project" value="UniProtKB-EC"/>
</dbReference>
<dbReference type="GO" id="GO:0009228">
    <property type="term" value="P:thiamine biosynthetic process"/>
    <property type="evidence" value="ECO:0007669"/>
    <property type="project" value="UniProtKB-KW"/>
</dbReference>
<dbReference type="GO" id="GO:0009229">
    <property type="term" value="P:thiamine diphosphate biosynthetic process"/>
    <property type="evidence" value="ECO:0007669"/>
    <property type="project" value="UniProtKB-UniRule"/>
</dbReference>
<dbReference type="GO" id="GO:0052837">
    <property type="term" value="P:thiazole biosynthetic process"/>
    <property type="evidence" value="ECO:0007669"/>
    <property type="project" value="TreeGrafter"/>
</dbReference>
<dbReference type="GO" id="GO:0002937">
    <property type="term" value="P:tRNA 4-thiouridine biosynthesis"/>
    <property type="evidence" value="ECO:0007669"/>
    <property type="project" value="TreeGrafter"/>
</dbReference>
<dbReference type="CDD" id="cd01712">
    <property type="entry name" value="PPase_ThiI"/>
    <property type="match status" value="1"/>
</dbReference>
<dbReference type="CDD" id="cd11716">
    <property type="entry name" value="THUMP_ThiI"/>
    <property type="match status" value="1"/>
</dbReference>
<dbReference type="FunFam" id="3.40.50.620:FF:000456">
    <property type="entry name" value="Probable tRNA sulfurtransferase"/>
    <property type="match status" value="1"/>
</dbReference>
<dbReference type="Gene3D" id="3.30.2130.30">
    <property type="match status" value="1"/>
</dbReference>
<dbReference type="Gene3D" id="3.40.50.620">
    <property type="entry name" value="HUPs"/>
    <property type="match status" value="1"/>
</dbReference>
<dbReference type="HAMAP" id="MF_00021">
    <property type="entry name" value="ThiI"/>
    <property type="match status" value="1"/>
</dbReference>
<dbReference type="InterPro" id="IPR014729">
    <property type="entry name" value="Rossmann-like_a/b/a_fold"/>
</dbReference>
<dbReference type="InterPro" id="IPR020536">
    <property type="entry name" value="ThiI_AANH"/>
</dbReference>
<dbReference type="InterPro" id="IPR054173">
    <property type="entry name" value="ThiI_fer"/>
</dbReference>
<dbReference type="InterPro" id="IPR004114">
    <property type="entry name" value="THUMP_dom"/>
</dbReference>
<dbReference type="InterPro" id="IPR049962">
    <property type="entry name" value="THUMP_ThiI"/>
</dbReference>
<dbReference type="InterPro" id="IPR003720">
    <property type="entry name" value="tRNA_STrfase"/>
</dbReference>
<dbReference type="InterPro" id="IPR050102">
    <property type="entry name" value="tRNA_sulfurtransferase_ThiI"/>
</dbReference>
<dbReference type="PANTHER" id="PTHR43209">
    <property type="entry name" value="TRNA SULFURTRANSFERASE"/>
    <property type="match status" value="1"/>
</dbReference>
<dbReference type="PANTHER" id="PTHR43209:SF1">
    <property type="entry name" value="TRNA SULFURTRANSFERASE"/>
    <property type="match status" value="1"/>
</dbReference>
<dbReference type="Pfam" id="PF02568">
    <property type="entry name" value="ThiI"/>
    <property type="match status" value="1"/>
</dbReference>
<dbReference type="Pfam" id="PF22025">
    <property type="entry name" value="ThiI_fer"/>
    <property type="match status" value="1"/>
</dbReference>
<dbReference type="Pfam" id="PF02926">
    <property type="entry name" value="THUMP"/>
    <property type="match status" value="1"/>
</dbReference>
<dbReference type="SMART" id="SM00981">
    <property type="entry name" value="THUMP"/>
    <property type="match status" value="1"/>
</dbReference>
<dbReference type="SUPFAM" id="SSF52402">
    <property type="entry name" value="Adenine nucleotide alpha hydrolases-like"/>
    <property type="match status" value="1"/>
</dbReference>
<dbReference type="SUPFAM" id="SSF143437">
    <property type="entry name" value="THUMP domain-like"/>
    <property type="match status" value="1"/>
</dbReference>
<dbReference type="PROSITE" id="PS51165">
    <property type="entry name" value="THUMP"/>
    <property type="match status" value="1"/>
</dbReference>
<accession>B0R5A9</accession>
<evidence type="ECO:0000255" key="1">
    <source>
        <dbReference type="HAMAP-Rule" id="MF_00021"/>
    </source>
</evidence>
<organism>
    <name type="scientific">Halobacterium salinarum (strain ATCC 29341 / DSM 671 / R1)</name>
    <dbReference type="NCBI Taxonomy" id="478009"/>
    <lineage>
        <taxon>Archaea</taxon>
        <taxon>Methanobacteriati</taxon>
        <taxon>Methanobacteriota</taxon>
        <taxon>Stenosarchaea group</taxon>
        <taxon>Halobacteria</taxon>
        <taxon>Halobacteriales</taxon>
        <taxon>Halobacteriaceae</taxon>
        <taxon>Halobacterium</taxon>
        <taxon>Halobacterium salinarum NRC-34001</taxon>
    </lineage>
</organism>